<gene>
    <name type="primary">NOP14</name>
    <name type="ordered locus">CAGL0J08844g</name>
</gene>
<comment type="function">
    <text evidence="1">Involved in nucleolar processing of pre-18S ribosomal RNA. Has a role in the nuclear export of 40S pre-ribosomal subunit to the cytoplasm (By similarity).</text>
</comment>
<comment type="subunit">
    <text evidence="1">Component of the ribosomal small subunit (SSU) processome.</text>
</comment>
<comment type="subcellular location">
    <subcellularLocation>
        <location evidence="1">Nucleus</location>
        <location evidence="1">Nucleolus</location>
    </subcellularLocation>
</comment>
<comment type="similarity">
    <text evidence="3">Belongs to the NOP14 family.</text>
</comment>
<reference key="1">
    <citation type="journal article" date="2004" name="Nature">
        <title>Genome evolution in yeasts.</title>
        <authorList>
            <person name="Dujon B."/>
            <person name="Sherman D."/>
            <person name="Fischer G."/>
            <person name="Durrens P."/>
            <person name="Casaregola S."/>
            <person name="Lafontaine I."/>
            <person name="de Montigny J."/>
            <person name="Marck C."/>
            <person name="Neuveglise C."/>
            <person name="Talla E."/>
            <person name="Goffard N."/>
            <person name="Frangeul L."/>
            <person name="Aigle M."/>
            <person name="Anthouard V."/>
            <person name="Babour A."/>
            <person name="Barbe V."/>
            <person name="Barnay S."/>
            <person name="Blanchin S."/>
            <person name="Beckerich J.-M."/>
            <person name="Beyne E."/>
            <person name="Bleykasten C."/>
            <person name="Boisrame A."/>
            <person name="Boyer J."/>
            <person name="Cattolico L."/>
            <person name="Confanioleri F."/>
            <person name="de Daruvar A."/>
            <person name="Despons L."/>
            <person name="Fabre E."/>
            <person name="Fairhead C."/>
            <person name="Ferry-Dumazet H."/>
            <person name="Groppi A."/>
            <person name="Hantraye F."/>
            <person name="Hennequin C."/>
            <person name="Jauniaux N."/>
            <person name="Joyet P."/>
            <person name="Kachouri R."/>
            <person name="Kerrest A."/>
            <person name="Koszul R."/>
            <person name="Lemaire M."/>
            <person name="Lesur I."/>
            <person name="Ma L."/>
            <person name="Muller H."/>
            <person name="Nicaud J.-M."/>
            <person name="Nikolski M."/>
            <person name="Oztas S."/>
            <person name="Ozier-Kalogeropoulos O."/>
            <person name="Pellenz S."/>
            <person name="Potier S."/>
            <person name="Richard G.-F."/>
            <person name="Straub M.-L."/>
            <person name="Suleau A."/>
            <person name="Swennen D."/>
            <person name="Tekaia F."/>
            <person name="Wesolowski-Louvel M."/>
            <person name="Westhof E."/>
            <person name="Wirth B."/>
            <person name="Zeniou-Meyer M."/>
            <person name="Zivanovic Y."/>
            <person name="Bolotin-Fukuhara M."/>
            <person name="Thierry A."/>
            <person name="Bouchier C."/>
            <person name="Caudron B."/>
            <person name="Scarpelli C."/>
            <person name="Gaillardin C."/>
            <person name="Weissenbach J."/>
            <person name="Wincker P."/>
            <person name="Souciet J.-L."/>
        </authorList>
    </citation>
    <scope>NUCLEOTIDE SEQUENCE [LARGE SCALE GENOMIC DNA]</scope>
    <source>
        <strain>ATCC 2001 / BCRC 20586 / JCM 3761 / NBRC 0622 / NRRL Y-65 / CBS 138</strain>
    </source>
</reference>
<sequence>MAGSQLKELKATLKAHGLTGQTNVKKSKKGKREAKKYDHEEKARTIAKIRDRFNPFEVKTTKNKRKGGDPGLLNSDRVAVGKPGISKQIGEEARRRAFEAKKLMKKRKGGVIDKRFGERDKTLTEEEKMLERFTRERQAGSQRKKNLFNLEDDDEDGPIELDMFGNKLTHLGESLSLADDLNVQAEDTEDLEEGQPQRKKTKLEVMKEIIAKSKFHKQERQAAQRKLEDNIDELDEDFDDVMAELMTTQTLKQDDIEVPAEEKDYDIKVKELNLEKRAAPADRTKTEEELQKEAEERRQKLEEQRLNRMQGMLEDEEGEERGVEDLDDGFWGSDSEVEEGENIANSDEDIEVESSSEEAISYKSKKLVAISCPQTHPEFLNDLKGLSLLEQPIHVKAIIKAYQPKLAEGNKVKLANFSKVLLKHMIYLANQRYDKDLIKFDKTQNEFLIILKRLSEKYNQAISEVSREYILDIQERFKKQNFHALNNGDILFFIIVGVLFSTSDQYHLVVTPAQIILCEFLEQIRFKSLKRIAVGSVLLRIILQYQRLSKRYIPETVYFLQKALLSLVVNPDDIESDMTLPIRLDTFDCGLKLKEPSLPDDAVVHLHELFTKSTTNEEDLKINVLSNLFEDLEKLIGSHWNNEAAFPEICEIFEPILSVYKVRYPSITTVESIEEKIKRMKKLNKHYPLALQAHRPTAIPSYAPKFEENFNPAKKSYDTDVARNEVNKMKAQLKKERKFVMKELRKDTKFEARQRIDEKKKEAEAYHSKMSNIINTINTEEGAEKNKYEREKRLRAGKK</sequence>
<protein>
    <recommendedName>
        <fullName>Probable nucleolar complex protein 14</fullName>
    </recommendedName>
</protein>
<keyword id="KW-0539">Nucleus</keyword>
<keyword id="KW-1185">Reference proteome</keyword>
<keyword id="KW-0690">Ribosome biogenesis</keyword>
<keyword id="KW-0698">rRNA processing</keyword>
<name>NOP14_CANGA</name>
<feature type="chain" id="PRO_0000137158" description="Probable nucleolar complex protein 14">
    <location>
        <begin position="1"/>
        <end position="799"/>
    </location>
</feature>
<feature type="region of interest" description="Disordered" evidence="2">
    <location>
        <begin position="13"/>
        <end position="41"/>
    </location>
</feature>
<feature type="region of interest" description="Disordered" evidence="2">
    <location>
        <begin position="56"/>
        <end position="78"/>
    </location>
</feature>
<feature type="region of interest" description="Disordered" evidence="2">
    <location>
        <begin position="133"/>
        <end position="158"/>
    </location>
</feature>
<feature type="region of interest" description="Disordered" evidence="2">
    <location>
        <begin position="277"/>
        <end position="304"/>
    </location>
</feature>
<feature type="region of interest" description="Disordered" evidence="2">
    <location>
        <begin position="777"/>
        <end position="799"/>
    </location>
</feature>
<feature type="compositionally biased region" description="Basic residues" evidence="2">
    <location>
        <begin position="25"/>
        <end position="34"/>
    </location>
</feature>
<feature type="compositionally biased region" description="Basic and acidic residues" evidence="2">
    <location>
        <begin position="782"/>
        <end position="799"/>
    </location>
</feature>
<organism>
    <name type="scientific">Candida glabrata (strain ATCC 2001 / BCRC 20586 / JCM 3761 / NBRC 0622 / NRRL Y-65 / CBS 138)</name>
    <name type="common">Yeast</name>
    <name type="synonym">Nakaseomyces glabratus</name>
    <dbReference type="NCBI Taxonomy" id="284593"/>
    <lineage>
        <taxon>Eukaryota</taxon>
        <taxon>Fungi</taxon>
        <taxon>Dikarya</taxon>
        <taxon>Ascomycota</taxon>
        <taxon>Saccharomycotina</taxon>
        <taxon>Saccharomycetes</taxon>
        <taxon>Saccharomycetales</taxon>
        <taxon>Saccharomycetaceae</taxon>
        <taxon>Nakaseomyces</taxon>
    </lineage>
</organism>
<proteinExistence type="inferred from homology"/>
<dbReference type="EMBL" id="CR380956">
    <property type="protein sequence ID" value="CAG61044.1"/>
    <property type="molecule type" value="Genomic_DNA"/>
</dbReference>
<dbReference type="RefSeq" id="XP_448093.1">
    <property type="nucleotide sequence ID" value="XM_448093.1"/>
</dbReference>
<dbReference type="SMR" id="Q6FNV1"/>
<dbReference type="FunCoup" id="Q6FNV1">
    <property type="interactions" value="1230"/>
</dbReference>
<dbReference type="STRING" id="284593.Q6FNV1"/>
<dbReference type="EnsemblFungi" id="CAGL0J08844g-T">
    <property type="protein sequence ID" value="CAGL0J08844g-T-p1"/>
    <property type="gene ID" value="CAGL0J08844g"/>
</dbReference>
<dbReference type="KEGG" id="cgr:2889679"/>
<dbReference type="CGD" id="CAL0133322">
    <property type="gene designation" value="CAGL0J08844g"/>
</dbReference>
<dbReference type="VEuPathDB" id="FungiDB:B1J91_J08844g"/>
<dbReference type="VEuPathDB" id="FungiDB:CAGL0J08844g"/>
<dbReference type="eggNOG" id="KOG2147">
    <property type="taxonomic scope" value="Eukaryota"/>
</dbReference>
<dbReference type="HOGENOM" id="CLU_008874_0_0_1"/>
<dbReference type="InParanoid" id="Q6FNV1"/>
<dbReference type="OMA" id="KSCWPSL"/>
<dbReference type="Proteomes" id="UP000002428">
    <property type="component" value="Chromosome J"/>
</dbReference>
<dbReference type="GO" id="GO:0030692">
    <property type="term" value="C:Noc4p-Nop14p complex"/>
    <property type="evidence" value="ECO:0007669"/>
    <property type="project" value="EnsemblFungi"/>
</dbReference>
<dbReference type="GO" id="GO:0005730">
    <property type="term" value="C:nucleolus"/>
    <property type="evidence" value="ECO:0000250"/>
    <property type="project" value="UniProtKB"/>
</dbReference>
<dbReference type="GO" id="GO:0032040">
    <property type="term" value="C:small-subunit processome"/>
    <property type="evidence" value="ECO:0007669"/>
    <property type="project" value="EnsemblFungi"/>
</dbReference>
<dbReference type="GO" id="GO:0030515">
    <property type="term" value="F:snoRNA binding"/>
    <property type="evidence" value="ECO:0000250"/>
    <property type="project" value="UniProtKB"/>
</dbReference>
<dbReference type="GO" id="GO:0034511">
    <property type="term" value="F:U3 snoRNA binding"/>
    <property type="evidence" value="ECO:0007669"/>
    <property type="project" value="EnsemblFungi"/>
</dbReference>
<dbReference type="GO" id="GO:0000480">
    <property type="term" value="P:endonucleolytic cleavage in 5'-ETS of tricistronic rRNA transcript (SSU-rRNA, 5.8S rRNA, LSU-rRNA)"/>
    <property type="evidence" value="ECO:0007669"/>
    <property type="project" value="EnsemblFungi"/>
</dbReference>
<dbReference type="GO" id="GO:0000447">
    <property type="term" value="P:endonucleolytic cleavage in ITS1 to separate SSU-rRNA from 5.8S rRNA and LSU-rRNA from tricistronic rRNA transcript (SSU-rRNA, 5.8S rRNA, LSU-rRNA)"/>
    <property type="evidence" value="ECO:0007669"/>
    <property type="project" value="EnsemblFungi"/>
</dbReference>
<dbReference type="GO" id="GO:0000472">
    <property type="term" value="P:endonucleolytic cleavage to generate mature 5'-end of SSU-rRNA from (SSU-rRNA, 5.8S rRNA, LSU-rRNA)"/>
    <property type="evidence" value="ECO:0007669"/>
    <property type="project" value="EnsemblFungi"/>
</dbReference>
<dbReference type="GO" id="GO:0042274">
    <property type="term" value="P:ribosomal small subunit biogenesis"/>
    <property type="evidence" value="ECO:0000250"/>
    <property type="project" value="UniProtKB"/>
</dbReference>
<dbReference type="InterPro" id="IPR007276">
    <property type="entry name" value="Nop14"/>
</dbReference>
<dbReference type="PANTHER" id="PTHR23183">
    <property type="entry name" value="NOP14"/>
    <property type="match status" value="1"/>
</dbReference>
<dbReference type="PANTHER" id="PTHR23183:SF0">
    <property type="entry name" value="NUCLEOLAR PROTEIN 14"/>
    <property type="match status" value="1"/>
</dbReference>
<dbReference type="Pfam" id="PF04147">
    <property type="entry name" value="Nop14"/>
    <property type="match status" value="2"/>
</dbReference>
<evidence type="ECO:0000250" key="1"/>
<evidence type="ECO:0000256" key="2">
    <source>
        <dbReference type="SAM" id="MobiDB-lite"/>
    </source>
</evidence>
<evidence type="ECO:0000305" key="3"/>
<accession>Q6FNV1</accession>